<proteinExistence type="inferred from homology"/>
<gene>
    <name evidence="1" type="primary">rpsM</name>
    <name type="ordered locus">Achl_2657</name>
</gene>
<sequence length="124" mass="13940">MARLAGVDIPREKRLEIALTYIYGVGKTRAHETLAATGISADVRVKDLTDAQLVELRDYIEGNYKVEGDLRREVAADIRRKVEIGSYEGLRHRKGLPVRGQRTKTNARTRKGPKRTVAGKKKAR</sequence>
<name>RS13_PSECP</name>
<feature type="chain" id="PRO_1000165597" description="Small ribosomal subunit protein uS13">
    <location>
        <begin position="1"/>
        <end position="124"/>
    </location>
</feature>
<feature type="region of interest" description="Disordered" evidence="2">
    <location>
        <begin position="94"/>
        <end position="124"/>
    </location>
</feature>
<organism>
    <name type="scientific">Pseudarthrobacter chlorophenolicus (strain ATCC 700700 / DSM 12829 / CIP 107037 / JCM 12360 / KCTC 9906 / NCIMB 13794 / A6)</name>
    <name type="common">Arthrobacter chlorophenolicus</name>
    <dbReference type="NCBI Taxonomy" id="452863"/>
    <lineage>
        <taxon>Bacteria</taxon>
        <taxon>Bacillati</taxon>
        <taxon>Actinomycetota</taxon>
        <taxon>Actinomycetes</taxon>
        <taxon>Micrococcales</taxon>
        <taxon>Micrococcaceae</taxon>
        <taxon>Pseudarthrobacter</taxon>
    </lineage>
</organism>
<reference key="1">
    <citation type="submission" date="2009-01" db="EMBL/GenBank/DDBJ databases">
        <title>Complete sequence of chromosome of Arthrobacter chlorophenolicus A6.</title>
        <authorList>
            <consortium name="US DOE Joint Genome Institute"/>
            <person name="Lucas S."/>
            <person name="Copeland A."/>
            <person name="Lapidus A."/>
            <person name="Glavina del Rio T."/>
            <person name="Tice H."/>
            <person name="Bruce D."/>
            <person name="Goodwin L."/>
            <person name="Pitluck S."/>
            <person name="Goltsman E."/>
            <person name="Clum A."/>
            <person name="Larimer F."/>
            <person name="Land M."/>
            <person name="Hauser L."/>
            <person name="Kyrpides N."/>
            <person name="Mikhailova N."/>
            <person name="Jansson J."/>
            <person name="Richardson P."/>
        </authorList>
    </citation>
    <scope>NUCLEOTIDE SEQUENCE [LARGE SCALE GENOMIC DNA]</scope>
    <source>
        <strain>ATCC 700700 / DSM 12829 / CIP 107037 / JCM 12360 / KCTC 9906 / NCIMB 13794 / A6</strain>
    </source>
</reference>
<dbReference type="EMBL" id="CP001341">
    <property type="protein sequence ID" value="ACL40622.1"/>
    <property type="molecule type" value="Genomic_DNA"/>
</dbReference>
<dbReference type="RefSeq" id="WP_003803743.1">
    <property type="nucleotide sequence ID" value="NC_011886.1"/>
</dbReference>
<dbReference type="SMR" id="B8HCX6"/>
<dbReference type="STRING" id="452863.Achl_2657"/>
<dbReference type="GeneID" id="97421032"/>
<dbReference type="KEGG" id="ach:Achl_2657"/>
<dbReference type="eggNOG" id="COG0099">
    <property type="taxonomic scope" value="Bacteria"/>
</dbReference>
<dbReference type="HOGENOM" id="CLU_103849_1_2_11"/>
<dbReference type="OrthoDB" id="9803610at2"/>
<dbReference type="Proteomes" id="UP000002505">
    <property type="component" value="Chromosome"/>
</dbReference>
<dbReference type="GO" id="GO:0005829">
    <property type="term" value="C:cytosol"/>
    <property type="evidence" value="ECO:0007669"/>
    <property type="project" value="TreeGrafter"/>
</dbReference>
<dbReference type="GO" id="GO:0015935">
    <property type="term" value="C:small ribosomal subunit"/>
    <property type="evidence" value="ECO:0007669"/>
    <property type="project" value="TreeGrafter"/>
</dbReference>
<dbReference type="GO" id="GO:0019843">
    <property type="term" value="F:rRNA binding"/>
    <property type="evidence" value="ECO:0007669"/>
    <property type="project" value="UniProtKB-UniRule"/>
</dbReference>
<dbReference type="GO" id="GO:0003735">
    <property type="term" value="F:structural constituent of ribosome"/>
    <property type="evidence" value="ECO:0007669"/>
    <property type="project" value="InterPro"/>
</dbReference>
<dbReference type="GO" id="GO:0000049">
    <property type="term" value="F:tRNA binding"/>
    <property type="evidence" value="ECO:0007669"/>
    <property type="project" value="UniProtKB-UniRule"/>
</dbReference>
<dbReference type="GO" id="GO:0006412">
    <property type="term" value="P:translation"/>
    <property type="evidence" value="ECO:0007669"/>
    <property type="project" value="UniProtKB-UniRule"/>
</dbReference>
<dbReference type="FunFam" id="1.10.8.50:FF:000001">
    <property type="entry name" value="30S ribosomal protein S13"/>
    <property type="match status" value="1"/>
</dbReference>
<dbReference type="FunFam" id="4.10.910.10:FF:000001">
    <property type="entry name" value="30S ribosomal protein S13"/>
    <property type="match status" value="1"/>
</dbReference>
<dbReference type="Gene3D" id="1.10.8.50">
    <property type="match status" value="1"/>
</dbReference>
<dbReference type="Gene3D" id="4.10.910.10">
    <property type="entry name" value="30s ribosomal protein s13, domain 2"/>
    <property type="match status" value="1"/>
</dbReference>
<dbReference type="HAMAP" id="MF_01315">
    <property type="entry name" value="Ribosomal_uS13"/>
    <property type="match status" value="1"/>
</dbReference>
<dbReference type="InterPro" id="IPR027437">
    <property type="entry name" value="Rbsml_uS13_C"/>
</dbReference>
<dbReference type="InterPro" id="IPR001892">
    <property type="entry name" value="Ribosomal_uS13"/>
</dbReference>
<dbReference type="InterPro" id="IPR010979">
    <property type="entry name" value="Ribosomal_uS13-like_H2TH"/>
</dbReference>
<dbReference type="InterPro" id="IPR019980">
    <property type="entry name" value="Ribosomal_uS13_bac-type"/>
</dbReference>
<dbReference type="InterPro" id="IPR018269">
    <property type="entry name" value="Ribosomal_uS13_CS"/>
</dbReference>
<dbReference type="NCBIfam" id="TIGR03631">
    <property type="entry name" value="uS13_bact"/>
    <property type="match status" value="1"/>
</dbReference>
<dbReference type="PANTHER" id="PTHR10871">
    <property type="entry name" value="30S RIBOSOMAL PROTEIN S13/40S RIBOSOMAL PROTEIN S18"/>
    <property type="match status" value="1"/>
</dbReference>
<dbReference type="PANTHER" id="PTHR10871:SF1">
    <property type="entry name" value="SMALL RIBOSOMAL SUBUNIT PROTEIN US13M"/>
    <property type="match status" value="1"/>
</dbReference>
<dbReference type="Pfam" id="PF00416">
    <property type="entry name" value="Ribosomal_S13"/>
    <property type="match status" value="1"/>
</dbReference>
<dbReference type="PIRSF" id="PIRSF002134">
    <property type="entry name" value="Ribosomal_S13"/>
    <property type="match status" value="1"/>
</dbReference>
<dbReference type="SUPFAM" id="SSF46946">
    <property type="entry name" value="S13-like H2TH domain"/>
    <property type="match status" value="1"/>
</dbReference>
<dbReference type="PROSITE" id="PS00646">
    <property type="entry name" value="RIBOSOMAL_S13_1"/>
    <property type="match status" value="1"/>
</dbReference>
<dbReference type="PROSITE" id="PS50159">
    <property type="entry name" value="RIBOSOMAL_S13_2"/>
    <property type="match status" value="1"/>
</dbReference>
<evidence type="ECO:0000255" key="1">
    <source>
        <dbReference type="HAMAP-Rule" id="MF_01315"/>
    </source>
</evidence>
<evidence type="ECO:0000256" key="2">
    <source>
        <dbReference type="SAM" id="MobiDB-lite"/>
    </source>
</evidence>
<evidence type="ECO:0000305" key="3"/>
<keyword id="KW-0687">Ribonucleoprotein</keyword>
<keyword id="KW-0689">Ribosomal protein</keyword>
<keyword id="KW-0694">RNA-binding</keyword>
<keyword id="KW-0699">rRNA-binding</keyword>
<keyword id="KW-0820">tRNA-binding</keyword>
<comment type="function">
    <text evidence="1">Located at the top of the head of the 30S subunit, it contacts several helices of the 16S rRNA. In the 70S ribosome it contacts the 23S rRNA (bridge B1a) and protein L5 of the 50S subunit (bridge B1b), connecting the 2 subunits; these bridges are implicated in subunit movement. Contacts the tRNAs in the A and P-sites.</text>
</comment>
<comment type="subunit">
    <text evidence="1">Part of the 30S ribosomal subunit. Forms a loose heterodimer with protein S19. Forms two bridges to the 50S subunit in the 70S ribosome.</text>
</comment>
<comment type="similarity">
    <text evidence="1">Belongs to the universal ribosomal protein uS13 family.</text>
</comment>
<accession>B8HCX6</accession>
<protein>
    <recommendedName>
        <fullName evidence="1">Small ribosomal subunit protein uS13</fullName>
    </recommendedName>
    <alternativeName>
        <fullName evidence="3">30S ribosomal protein S13</fullName>
    </alternativeName>
</protein>